<feature type="chain" id="PRO_0000359305" description="5'-methylthioadenosine/S-adenosylhomocysteine nucleosidase">
    <location>
        <begin position="1"/>
        <end position="230"/>
    </location>
</feature>
<feature type="active site" description="Proton acceptor" evidence="1">
    <location>
        <position position="12"/>
    </location>
</feature>
<feature type="active site" description="Proton donor" evidence="1">
    <location>
        <position position="197"/>
    </location>
</feature>
<feature type="binding site" evidence="1">
    <location>
        <position position="78"/>
    </location>
    <ligand>
        <name>substrate</name>
    </ligand>
</feature>
<feature type="binding site" evidence="1">
    <location>
        <position position="152"/>
    </location>
    <ligand>
        <name>substrate</name>
    </ligand>
</feature>
<feature type="binding site" evidence="1">
    <location>
        <begin position="173"/>
        <end position="174"/>
    </location>
    <ligand>
        <name>substrate</name>
    </ligand>
</feature>
<evidence type="ECO:0000255" key="1">
    <source>
        <dbReference type="HAMAP-Rule" id="MF_01684"/>
    </source>
</evidence>
<name>MTNN_HAEI8</name>
<reference key="1">
    <citation type="journal article" date="2005" name="J. Bacteriol.">
        <title>Genomic sequence of an otitis media isolate of nontypeable Haemophilus influenzae: comparative study with H. influenzae serotype d, strain KW20.</title>
        <authorList>
            <person name="Harrison A."/>
            <person name="Dyer D.W."/>
            <person name="Gillaspy A."/>
            <person name="Ray W.C."/>
            <person name="Mungur R."/>
            <person name="Carson M.B."/>
            <person name="Zhong H."/>
            <person name="Gipson J."/>
            <person name="Gipson M."/>
            <person name="Johnson L.S."/>
            <person name="Lewis L."/>
            <person name="Bakaletz L.O."/>
            <person name="Munson R.S. Jr."/>
        </authorList>
    </citation>
    <scope>NUCLEOTIDE SEQUENCE [LARGE SCALE GENOMIC DNA]</scope>
    <source>
        <strain>86-028NP</strain>
    </source>
</reference>
<keyword id="KW-0028">Amino-acid biosynthesis</keyword>
<keyword id="KW-0378">Hydrolase</keyword>
<keyword id="KW-0486">Methionine biosynthesis</keyword>
<accession>Q4QL83</accession>
<comment type="function">
    <text evidence="1">Catalyzes the irreversible cleavage of the glycosidic bond in both 5'-methylthioadenosine (MTA) and S-adenosylhomocysteine (SAH/AdoHcy) to adenine and the corresponding thioribose, 5'-methylthioribose and S-ribosylhomocysteine, respectively. Also cleaves 5'-deoxyadenosine, a toxic by-product of radical S-adenosylmethionine (SAM) enzymes, into 5-deoxyribose and adenine.</text>
</comment>
<comment type="catalytic activity">
    <reaction evidence="1">
        <text>S-adenosyl-L-homocysteine + H2O = S-(5-deoxy-D-ribos-5-yl)-L-homocysteine + adenine</text>
        <dbReference type="Rhea" id="RHEA:17805"/>
        <dbReference type="ChEBI" id="CHEBI:15377"/>
        <dbReference type="ChEBI" id="CHEBI:16708"/>
        <dbReference type="ChEBI" id="CHEBI:57856"/>
        <dbReference type="ChEBI" id="CHEBI:58195"/>
        <dbReference type="EC" id="3.2.2.9"/>
    </reaction>
</comment>
<comment type="catalytic activity">
    <reaction evidence="1">
        <text>S-methyl-5'-thioadenosine + H2O = 5-(methylsulfanyl)-D-ribose + adenine</text>
        <dbReference type="Rhea" id="RHEA:13617"/>
        <dbReference type="ChEBI" id="CHEBI:15377"/>
        <dbReference type="ChEBI" id="CHEBI:16708"/>
        <dbReference type="ChEBI" id="CHEBI:17509"/>
        <dbReference type="ChEBI" id="CHEBI:78440"/>
        <dbReference type="EC" id="3.2.2.9"/>
    </reaction>
</comment>
<comment type="catalytic activity">
    <reaction evidence="1">
        <text>5'-deoxyadenosine + H2O = 5-deoxy-D-ribose + adenine</text>
        <dbReference type="Rhea" id="RHEA:29859"/>
        <dbReference type="ChEBI" id="CHEBI:15377"/>
        <dbReference type="ChEBI" id="CHEBI:16708"/>
        <dbReference type="ChEBI" id="CHEBI:17319"/>
        <dbReference type="ChEBI" id="CHEBI:149540"/>
        <dbReference type="EC" id="3.2.2.9"/>
    </reaction>
    <physiologicalReaction direction="left-to-right" evidence="1">
        <dbReference type="Rhea" id="RHEA:29860"/>
    </physiologicalReaction>
</comment>
<comment type="pathway">
    <text evidence="1">Amino-acid biosynthesis; L-methionine biosynthesis via salvage pathway; S-methyl-5-thio-alpha-D-ribose 1-phosphate from S-methyl-5'-thioadenosine (hydrolase route): step 1/2.</text>
</comment>
<comment type="similarity">
    <text evidence="1">Belongs to the PNP/UDP phosphorylase family. MtnN subfamily.</text>
</comment>
<organism>
    <name type="scientific">Haemophilus influenzae (strain 86-028NP)</name>
    <dbReference type="NCBI Taxonomy" id="281310"/>
    <lineage>
        <taxon>Bacteria</taxon>
        <taxon>Pseudomonadati</taxon>
        <taxon>Pseudomonadota</taxon>
        <taxon>Gammaproteobacteria</taxon>
        <taxon>Pasteurellales</taxon>
        <taxon>Pasteurellaceae</taxon>
        <taxon>Haemophilus</taxon>
    </lineage>
</organism>
<protein>
    <recommendedName>
        <fullName evidence="1">5'-methylthioadenosine/S-adenosylhomocysteine nucleosidase</fullName>
        <shortName evidence="1">MTA/SAH nucleosidase</shortName>
        <shortName evidence="1">MTAN</shortName>
        <ecNumber evidence="1">3.2.2.9</ecNumber>
    </recommendedName>
    <alternativeName>
        <fullName evidence="1">5'-deoxyadenosine nucleosidase</fullName>
        <shortName evidence="1">DOA nucleosidase</shortName>
        <shortName evidence="1">dAdo nucleosidase</shortName>
    </alternativeName>
    <alternativeName>
        <fullName evidence="1">5'-methylthioadenosine nucleosidase</fullName>
        <shortName evidence="1">MTA nucleosidase</shortName>
    </alternativeName>
    <alternativeName>
        <fullName evidence="1">S-adenosylhomocysteine nucleosidase</fullName>
        <shortName evidence="1">AdoHcy nucleosidase</shortName>
        <shortName evidence="1">SAH nucleosidase</shortName>
        <shortName evidence="1">SRH nucleosidase</shortName>
    </alternativeName>
</protein>
<proteinExistence type="inferred from homology"/>
<dbReference type="EC" id="3.2.2.9" evidence="1"/>
<dbReference type="EMBL" id="CP000057">
    <property type="protein sequence ID" value="AAX88214.1"/>
    <property type="molecule type" value="Genomic_DNA"/>
</dbReference>
<dbReference type="RefSeq" id="WP_011272447.1">
    <property type="nucleotide sequence ID" value="NC_007146.2"/>
</dbReference>
<dbReference type="SMR" id="Q4QL83"/>
<dbReference type="KEGG" id="hit:NTHI1389"/>
<dbReference type="HOGENOM" id="CLU_031248_2_2_6"/>
<dbReference type="UniPathway" id="UPA00904">
    <property type="reaction ID" value="UER00871"/>
</dbReference>
<dbReference type="Proteomes" id="UP000002525">
    <property type="component" value="Chromosome"/>
</dbReference>
<dbReference type="GO" id="GO:0005829">
    <property type="term" value="C:cytosol"/>
    <property type="evidence" value="ECO:0007669"/>
    <property type="project" value="TreeGrafter"/>
</dbReference>
<dbReference type="GO" id="GO:0008782">
    <property type="term" value="F:adenosylhomocysteine nucleosidase activity"/>
    <property type="evidence" value="ECO:0007669"/>
    <property type="project" value="UniProtKB-UniRule"/>
</dbReference>
<dbReference type="GO" id="GO:0008930">
    <property type="term" value="F:methylthioadenosine nucleosidase activity"/>
    <property type="evidence" value="ECO:0007669"/>
    <property type="project" value="UniProtKB-UniRule"/>
</dbReference>
<dbReference type="GO" id="GO:0019509">
    <property type="term" value="P:L-methionine salvage from methylthioadenosine"/>
    <property type="evidence" value="ECO:0007669"/>
    <property type="project" value="UniProtKB-UniRule"/>
</dbReference>
<dbReference type="GO" id="GO:0019284">
    <property type="term" value="P:L-methionine salvage from S-adenosylmethionine"/>
    <property type="evidence" value="ECO:0007669"/>
    <property type="project" value="TreeGrafter"/>
</dbReference>
<dbReference type="GO" id="GO:0009164">
    <property type="term" value="P:nucleoside catabolic process"/>
    <property type="evidence" value="ECO:0007669"/>
    <property type="project" value="InterPro"/>
</dbReference>
<dbReference type="CDD" id="cd09008">
    <property type="entry name" value="MTAN"/>
    <property type="match status" value="1"/>
</dbReference>
<dbReference type="FunFam" id="3.40.50.1580:FF:000001">
    <property type="entry name" value="MTA/SAH nucleosidase family protein"/>
    <property type="match status" value="1"/>
</dbReference>
<dbReference type="Gene3D" id="3.40.50.1580">
    <property type="entry name" value="Nucleoside phosphorylase domain"/>
    <property type="match status" value="1"/>
</dbReference>
<dbReference type="HAMAP" id="MF_01684">
    <property type="entry name" value="Salvage_MtnN"/>
    <property type="match status" value="1"/>
</dbReference>
<dbReference type="InterPro" id="IPR010049">
    <property type="entry name" value="MTA_SAH_Nsdase"/>
</dbReference>
<dbReference type="InterPro" id="IPR000845">
    <property type="entry name" value="Nucleoside_phosphorylase_d"/>
</dbReference>
<dbReference type="InterPro" id="IPR035994">
    <property type="entry name" value="Nucleoside_phosphorylase_sf"/>
</dbReference>
<dbReference type="NCBIfam" id="TIGR01704">
    <property type="entry name" value="MTA_SAH-Nsdase"/>
    <property type="match status" value="1"/>
</dbReference>
<dbReference type="NCBIfam" id="NF004079">
    <property type="entry name" value="PRK05584.1"/>
    <property type="match status" value="1"/>
</dbReference>
<dbReference type="PANTHER" id="PTHR46832">
    <property type="entry name" value="5'-METHYLTHIOADENOSINE/S-ADENOSYLHOMOCYSTEINE NUCLEOSIDASE"/>
    <property type="match status" value="1"/>
</dbReference>
<dbReference type="PANTHER" id="PTHR46832:SF1">
    <property type="entry name" value="5'-METHYLTHIOADENOSINE_S-ADENOSYLHOMOCYSTEINE NUCLEOSIDASE"/>
    <property type="match status" value="1"/>
</dbReference>
<dbReference type="Pfam" id="PF01048">
    <property type="entry name" value="PNP_UDP_1"/>
    <property type="match status" value="1"/>
</dbReference>
<dbReference type="SUPFAM" id="SSF53167">
    <property type="entry name" value="Purine and uridine phosphorylases"/>
    <property type="match status" value="1"/>
</dbReference>
<sequence length="230" mass="24114">MKIGIVGAMAQEVEILKNLMADRTETRVASAVIFEGKINGKDIALLQSGIGKVAAAIGTTALLQLAKPDCVINTGSAGGVAKGLKVGDIVISDETRYHDADVTAFGYEKGQLPANPAAFLSDKKLADLAQEMAEKQGQSVKRGLICSGDSFINSEDKIAQIQADFPNVMGVEMEATAIAQVCYAFNVPFVVVRAISDGGDGKASMSFEEFLPLAAKQSSALVLGMIDRLS</sequence>
<gene>
    <name evidence="1" type="primary">mtnN</name>
    <name type="ordered locus">NTHI1389</name>
</gene>